<evidence type="ECO:0000250" key="1">
    <source>
        <dbReference type="UniProtKB" id="P02794"/>
    </source>
</evidence>
<evidence type="ECO:0000250" key="2">
    <source>
        <dbReference type="UniProtKB" id="P09528"/>
    </source>
</evidence>
<evidence type="ECO:0000250" key="3">
    <source>
        <dbReference type="UniProtKB" id="P19130"/>
    </source>
</evidence>
<evidence type="ECO:0000255" key="4">
    <source>
        <dbReference type="PROSITE-ProRule" id="PRU00085"/>
    </source>
</evidence>
<evidence type="ECO:0000305" key="5"/>
<dbReference type="EC" id="1.16.3.1" evidence="1"/>
<dbReference type="EMBL" id="M63912">
    <property type="protein sequence ID" value="AAA31247.1"/>
    <property type="molecule type" value="mRNA"/>
</dbReference>
<dbReference type="PIR" id="I46710">
    <property type="entry name" value="I46710"/>
</dbReference>
<dbReference type="SMR" id="P25915"/>
<dbReference type="FunCoup" id="P25915">
    <property type="interactions" value="223"/>
</dbReference>
<dbReference type="STRING" id="9986.ENSOCUP00000012121"/>
<dbReference type="PaxDb" id="9986-ENSOCUP00000012121"/>
<dbReference type="eggNOG" id="KOG2332">
    <property type="taxonomic scope" value="Eukaryota"/>
</dbReference>
<dbReference type="InParanoid" id="P25915"/>
<dbReference type="Proteomes" id="UP000001811">
    <property type="component" value="Unplaced"/>
</dbReference>
<dbReference type="GO" id="GO:0005776">
    <property type="term" value="C:autophagosome"/>
    <property type="evidence" value="ECO:0007669"/>
    <property type="project" value="UniProtKB-SubCell"/>
</dbReference>
<dbReference type="GO" id="GO:0031410">
    <property type="term" value="C:cytoplasmic vesicle"/>
    <property type="evidence" value="ECO:0007669"/>
    <property type="project" value="UniProtKB-KW"/>
</dbReference>
<dbReference type="GO" id="GO:0005764">
    <property type="term" value="C:lysosome"/>
    <property type="evidence" value="ECO:0007669"/>
    <property type="project" value="UniProtKB-SubCell"/>
</dbReference>
<dbReference type="GO" id="GO:0008199">
    <property type="term" value="F:ferric iron binding"/>
    <property type="evidence" value="ECO:0007669"/>
    <property type="project" value="InterPro"/>
</dbReference>
<dbReference type="GO" id="GO:0008198">
    <property type="term" value="F:ferrous iron binding"/>
    <property type="evidence" value="ECO:0007669"/>
    <property type="project" value="TreeGrafter"/>
</dbReference>
<dbReference type="GO" id="GO:0004322">
    <property type="term" value="F:ferroxidase activity"/>
    <property type="evidence" value="ECO:0007669"/>
    <property type="project" value="UniProtKB-EC"/>
</dbReference>
<dbReference type="GO" id="GO:0006879">
    <property type="term" value="P:intracellular iron ion homeostasis"/>
    <property type="evidence" value="ECO:0007669"/>
    <property type="project" value="UniProtKB-KW"/>
</dbReference>
<dbReference type="GO" id="GO:0006826">
    <property type="term" value="P:iron ion transport"/>
    <property type="evidence" value="ECO:0007669"/>
    <property type="project" value="InterPro"/>
</dbReference>
<dbReference type="GO" id="GO:0110076">
    <property type="term" value="P:negative regulation of ferroptosis"/>
    <property type="evidence" value="ECO:0000250"/>
    <property type="project" value="UniProtKB"/>
</dbReference>
<dbReference type="CDD" id="cd01056">
    <property type="entry name" value="Euk_Ferritin"/>
    <property type="match status" value="1"/>
</dbReference>
<dbReference type="FunFam" id="1.20.1260.10:FF:000016">
    <property type="entry name" value="Ferritin heavy chain"/>
    <property type="match status" value="1"/>
</dbReference>
<dbReference type="Gene3D" id="1.20.1260.10">
    <property type="match status" value="1"/>
</dbReference>
<dbReference type="InterPro" id="IPR001519">
    <property type="entry name" value="Ferritin"/>
</dbReference>
<dbReference type="InterPro" id="IPR012347">
    <property type="entry name" value="Ferritin-like"/>
</dbReference>
<dbReference type="InterPro" id="IPR009040">
    <property type="entry name" value="Ferritin-like_diiron"/>
</dbReference>
<dbReference type="InterPro" id="IPR009078">
    <property type="entry name" value="Ferritin-like_SF"/>
</dbReference>
<dbReference type="InterPro" id="IPR014034">
    <property type="entry name" value="Ferritin_CS"/>
</dbReference>
<dbReference type="InterPro" id="IPR008331">
    <property type="entry name" value="Ferritin_DPS_dom"/>
</dbReference>
<dbReference type="PANTHER" id="PTHR11431">
    <property type="entry name" value="FERRITIN"/>
    <property type="match status" value="1"/>
</dbReference>
<dbReference type="PANTHER" id="PTHR11431:SF37">
    <property type="entry name" value="FERRITIN HEAVY CHAIN"/>
    <property type="match status" value="1"/>
</dbReference>
<dbReference type="Pfam" id="PF00210">
    <property type="entry name" value="Ferritin"/>
    <property type="match status" value="1"/>
</dbReference>
<dbReference type="SUPFAM" id="SSF47240">
    <property type="entry name" value="Ferritin-like"/>
    <property type="match status" value="1"/>
</dbReference>
<dbReference type="PROSITE" id="PS00540">
    <property type="entry name" value="FERRITIN_1"/>
    <property type="match status" value="1"/>
</dbReference>
<dbReference type="PROSITE" id="PS00204">
    <property type="entry name" value="FERRITIN_2"/>
    <property type="match status" value="1"/>
</dbReference>
<dbReference type="PROSITE" id="PS50905">
    <property type="entry name" value="FERRITIN_LIKE"/>
    <property type="match status" value="1"/>
</dbReference>
<gene>
    <name type="primary">FTH1</name>
    <name type="synonym">FTH</name>
</gene>
<accession>P25915</accession>
<organism>
    <name type="scientific">Oryctolagus cuniculus</name>
    <name type="common">Rabbit</name>
    <dbReference type="NCBI Taxonomy" id="9986"/>
    <lineage>
        <taxon>Eukaryota</taxon>
        <taxon>Metazoa</taxon>
        <taxon>Chordata</taxon>
        <taxon>Craniata</taxon>
        <taxon>Vertebrata</taxon>
        <taxon>Euteleostomi</taxon>
        <taxon>Mammalia</taxon>
        <taxon>Eutheria</taxon>
        <taxon>Euarchontoglires</taxon>
        <taxon>Glires</taxon>
        <taxon>Lagomorpha</taxon>
        <taxon>Leporidae</taxon>
        <taxon>Oryctolagus</taxon>
    </lineage>
</organism>
<feature type="chain" id="PRO_0000201052" description="Ferritin heavy chain">
    <location>
        <begin position="1" status="less than"/>
        <end position="164"/>
    </location>
</feature>
<feature type="domain" description="Ferritin-like diiron" evidence="4">
    <location>
        <begin position="1" status="less than"/>
        <end position="141"/>
    </location>
</feature>
<feature type="binding site" evidence="4">
    <location>
        <position position="9"/>
    </location>
    <ligand>
        <name>Fe cation</name>
        <dbReference type="ChEBI" id="CHEBI:24875"/>
        <label>1</label>
    </ligand>
</feature>
<feature type="binding site" evidence="4">
    <location>
        <position position="44"/>
    </location>
    <ligand>
        <name>Fe cation</name>
        <dbReference type="ChEBI" id="CHEBI:24875"/>
        <label>1</label>
    </ligand>
</feature>
<feature type="binding site" evidence="4">
    <location>
        <position position="44"/>
    </location>
    <ligand>
        <name>Fe cation</name>
        <dbReference type="ChEBI" id="CHEBI:24875"/>
        <label>2</label>
    </ligand>
</feature>
<feature type="binding site" evidence="4">
    <location>
        <position position="47"/>
    </location>
    <ligand>
        <name>Fe cation</name>
        <dbReference type="ChEBI" id="CHEBI:24875"/>
        <label>1</label>
    </ligand>
</feature>
<feature type="binding site" evidence="4">
    <location>
        <position position="89"/>
    </location>
    <ligand>
        <name>Fe cation</name>
        <dbReference type="ChEBI" id="CHEBI:24875"/>
        <label>2</label>
    </ligand>
</feature>
<feature type="binding site" evidence="4">
    <location>
        <position position="123"/>
    </location>
    <ligand>
        <name>Fe cation</name>
        <dbReference type="ChEBI" id="CHEBI:24875"/>
        <label>2</label>
    </ligand>
</feature>
<feature type="modified residue" description="Phosphoserine" evidence="1">
    <location>
        <position position="160"/>
    </location>
</feature>
<feature type="modified residue" description="Phosphoserine" evidence="1">
    <location>
        <position position="164"/>
    </location>
</feature>
<feature type="non-terminal residue">
    <location>
        <position position="1"/>
    </location>
</feature>
<sequence>AINRQINLELYASYVYLSMSYYFDRDDVALKNFAKYFLHQSHEEREHAEKLMKLQNQRGGRIFLQDIKKPEYDDWESGLNAMECALHLEKSVNQSLLELHKLATDKNDPHLCDFIETHYLNEQVKSIKELGDHVTNLRKMGAPESGMAEYLFDKHTLGHSDNES</sequence>
<name>FRIH_RABIT</name>
<protein>
    <recommendedName>
        <fullName>Ferritin heavy chain</fullName>
        <shortName>Ferritin H subunit</shortName>
        <ecNumber evidence="1">1.16.3.1</ecNumber>
    </recommendedName>
</protein>
<reference key="1">
    <citation type="journal article" date="1991" name="J. Biol. Chem.">
        <title>Increased ferritin gene expression is both promoted by cAMP and a marker of growth arrest in rabbit vascular smooth muscle cells.</title>
        <authorList>
            <person name="Liau G."/>
            <person name="Chan L.M."/>
            <person name="Feng P."/>
        </authorList>
    </citation>
    <scope>NUCLEOTIDE SEQUENCE [MRNA]</scope>
    <source>
        <tissue>Vascular smooth muscle</tissue>
    </source>
</reference>
<comment type="function">
    <text evidence="1 2">Stores iron in a soluble, non-toxic, readily available form (By similarity). Important for iron homeostasis (By similarity). Has ferroxidase activity (By similarity). Iron is taken up in the ferrous form and deposited as ferric hydroxides after oxidation (By similarity). Also plays a role in delivery of iron to cells (By similarity). Mediates iron uptake in capsule cells of the developing kidney (By similarity). Delivery to lysosomes is mediated by the cargo receptor NCOA4 for autophagic degradation and release of iron (By similarity).</text>
</comment>
<comment type="catalytic activity">
    <reaction evidence="1">
        <text>4 Fe(2+) + O2 + 4 H(+) = 4 Fe(3+) + 2 H2O</text>
        <dbReference type="Rhea" id="RHEA:11148"/>
        <dbReference type="ChEBI" id="CHEBI:15377"/>
        <dbReference type="ChEBI" id="CHEBI:15378"/>
        <dbReference type="ChEBI" id="CHEBI:15379"/>
        <dbReference type="ChEBI" id="CHEBI:29033"/>
        <dbReference type="ChEBI" id="CHEBI:29034"/>
        <dbReference type="EC" id="1.16.3.1"/>
    </reaction>
</comment>
<comment type="subunit">
    <text evidence="1 2">Oligomer of 24 subunits. There are two types of subunits: L (light) chain and H (heavy) chain. The major chain can be light or heavy, depending on the species and tissue type. The functional molecule forms a roughly spherical shell with a diameter of 12 nm and contains a central cavity into which the insoluble mineral iron core is deposited. Interacts with NCOA4; NCOA4 promotes targeting of the iron-binding ferritin complex to autolysosomes following starvation or iron depletion (By similarity).</text>
</comment>
<comment type="subcellular location">
    <subcellularLocation>
        <location evidence="3">Cytoplasm</location>
    </subcellularLocation>
    <subcellularLocation>
        <location evidence="1">Lysosome</location>
    </subcellularLocation>
    <subcellularLocation>
        <location evidence="1">Cytoplasmic vesicle</location>
        <location evidence="1">Autophagosome</location>
    </subcellularLocation>
</comment>
<comment type="similarity">
    <text evidence="5">Belongs to the ferritin family.</text>
</comment>
<proteinExistence type="evidence at transcript level"/>
<keyword id="KW-0963">Cytoplasm</keyword>
<keyword id="KW-0968">Cytoplasmic vesicle</keyword>
<keyword id="KW-0408">Iron</keyword>
<keyword id="KW-0409">Iron storage</keyword>
<keyword id="KW-0458">Lysosome</keyword>
<keyword id="KW-0479">Metal-binding</keyword>
<keyword id="KW-0560">Oxidoreductase</keyword>
<keyword id="KW-0597">Phosphoprotein</keyword>
<keyword id="KW-1185">Reference proteome</keyword>